<evidence type="ECO:0000256" key="1">
    <source>
        <dbReference type="SAM" id="MobiDB-lite"/>
    </source>
</evidence>
<protein>
    <recommendedName>
        <fullName>Uncharacterized protein C15H7.4</fullName>
    </recommendedName>
</protein>
<reference key="1">
    <citation type="journal article" date="1994" name="Nature">
        <title>2.2 Mb of contiguous nucleotide sequence from chromosome III of C. elegans.</title>
        <authorList>
            <person name="Wilson R."/>
            <person name="Ainscough R."/>
            <person name="Anderson K."/>
            <person name="Baynes C."/>
            <person name="Berks M."/>
            <person name="Bonfield J."/>
            <person name="Burton J."/>
            <person name="Connell M."/>
            <person name="Copsey T."/>
            <person name="Cooper J."/>
            <person name="Coulson A."/>
            <person name="Craxton M."/>
            <person name="Dear S."/>
            <person name="Du Z."/>
            <person name="Durbin R."/>
            <person name="Favello A."/>
            <person name="Fraser A."/>
            <person name="Fulton L."/>
            <person name="Gardner A."/>
            <person name="Green P."/>
            <person name="Hawkins T."/>
            <person name="Hillier L."/>
            <person name="Jier M."/>
            <person name="Johnston L."/>
            <person name="Jones M."/>
            <person name="Kershaw J."/>
            <person name="Kirsten J."/>
            <person name="Laisster N."/>
            <person name="Latreille P."/>
            <person name="Lightning J."/>
            <person name="Lloyd C."/>
            <person name="Mortimore B."/>
            <person name="O'Callaghan M."/>
            <person name="Parsons J."/>
            <person name="Percy C."/>
            <person name="Rifken L."/>
            <person name="Roopra A."/>
            <person name="Saunders D."/>
            <person name="Shownkeen R."/>
            <person name="Sims M."/>
            <person name="Smaldon N."/>
            <person name="Smith A."/>
            <person name="Smith M."/>
            <person name="Sonnhammer E."/>
            <person name="Staden R."/>
            <person name="Sulston J."/>
            <person name="Thierry-Mieg J."/>
            <person name="Thomas K."/>
            <person name="Vaudin M."/>
            <person name="Vaughan K."/>
            <person name="Waterston R."/>
            <person name="Watson A."/>
            <person name="Weinstock L."/>
            <person name="Wilkinson-Sproat J."/>
            <person name="Wohldman P."/>
        </authorList>
    </citation>
    <scope>NUCLEOTIDE SEQUENCE [LARGE SCALE GENOMIC DNA]</scope>
    <source>
        <strain>Bristol N2</strain>
    </source>
</reference>
<reference key="2">
    <citation type="journal article" date="1998" name="Science">
        <title>Genome sequence of the nematode C. elegans: a platform for investigating biology.</title>
        <authorList>
            <consortium name="The C. elegans sequencing consortium"/>
        </authorList>
    </citation>
    <scope>NUCLEOTIDE SEQUENCE [LARGE SCALE GENOMIC DNA]</scope>
    <source>
        <strain>Bristol N2</strain>
    </source>
</reference>
<accession>P34338</accession>
<dbReference type="EMBL" id="Z22173">
    <property type="protein sequence ID" value="CAA80126.1"/>
    <property type="molecule type" value="Genomic_DNA"/>
</dbReference>
<dbReference type="PIR" id="S40753">
    <property type="entry name" value="S40753"/>
</dbReference>
<dbReference type="RefSeq" id="NP_499136.1">
    <property type="nucleotide sequence ID" value="NM_066735.4"/>
</dbReference>
<dbReference type="BioGRID" id="47488">
    <property type="interactions" value="1"/>
</dbReference>
<dbReference type="FunCoup" id="P34338">
    <property type="interactions" value="7"/>
</dbReference>
<dbReference type="STRING" id="6239.C15H7.4.1"/>
<dbReference type="PaxDb" id="6239-C15H7.4"/>
<dbReference type="EnsemblMetazoa" id="C15H7.4.1">
    <property type="protein sequence ID" value="C15H7.4.1"/>
    <property type="gene ID" value="WBGene00007611"/>
</dbReference>
<dbReference type="GeneID" id="182640"/>
<dbReference type="KEGG" id="cel:CELE_C15H7.4"/>
<dbReference type="UCSC" id="C15H7.4">
    <property type="organism name" value="c. elegans"/>
</dbReference>
<dbReference type="AGR" id="WB:WBGene00007611"/>
<dbReference type="CTD" id="182640"/>
<dbReference type="WormBase" id="C15H7.4">
    <property type="protein sequence ID" value="CE00082"/>
    <property type="gene ID" value="WBGene00007611"/>
</dbReference>
<dbReference type="eggNOG" id="ENOG502T3BN">
    <property type="taxonomic scope" value="Eukaryota"/>
</dbReference>
<dbReference type="HOGENOM" id="CLU_872200_0_0_1"/>
<dbReference type="InParanoid" id="P34338"/>
<dbReference type="OrthoDB" id="5875557at2759"/>
<dbReference type="PRO" id="PR:P34338"/>
<dbReference type="Proteomes" id="UP000001940">
    <property type="component" value="Chromosome III"/>
</dbReference>
<dbReference type="Bgee" id="WBGene00007611">
    <property type="expression patterns" value="Expressed in material anatomical entity and 2 other cell types or tissues"/>
</dbReference>
<dbReference type="InterPro" id="IPR040443">
    <property type="entry name" value="PH_15"/>
</dbReference>
<dbReference type="Pfam" id="PF17339">
    <property type="entry name" value="PH_15"/>
    <property type="match status" value="1"/>
</dbReference>
<gene>
    <name type="ORF">C15H7.4</name>
</gene>
<proteinExistence type="predicted"/>
<feature type="chain" id="PRO_0000065179" description="Uncharacterized protein C15H7.4">
    <location>
        <begin position="1"/>
        <end position="327"/>
    </location>
</feature>
<feature type="region of interest" description="Disordered" evidence="1">
    <location>
        <begin position="129"/>
        <end position="306"/>
    </location>
</feature>
<feature type="compositionally biased region" description="Polar residues" evidence="1">
    <location>
        <begin position="130"/>
        <end position="144"/>
    </location>
</feature>
<feature type="compositionally biased region" description="Basic and acidic residues" evidence="1">
    <location>
        <begin position="184"/>
        <end position="196"/>
    </location>
</feature>
<feature type="compositionally biased region" description="Basic and acidic residues" evidence="1">
    <location>
        <begin position="233"/>
        <end position="276"/>
    </location>
</feature>
<sequence>MCSVKPKYISLPEQNSLCSLPNSGCCQVEVKIGRSKWEQQKAILVKVDGEPAGKIFIYSQPLIGQMYPLHELKSMGVICEKAGDFLVNLVTERGLKLTFKPIGSTANCFVTALVSGNFTSLTHETHIKTPLQNQEATTSPTIESDLTDKPDTNVYTGSREGYVAPSEKGSNEKKKEVVPNGGDKSVENKKGSDRNVKKTPSKTVTKPLLSESRKRKEAKTLATTQSQDLPAPTKDEPERTNSEPDNGEQEKIKKEKKKGTETSLKDGKNKLNEKIVKPAPTTTPDAGNGGLTPGKEDNKKTVTTSSVEIEVPEKKKAVENAGIIKIS</sequence>
<name>YK14_CAEEL</name>
<organism>
    <name type="scientific">Caenorhabditis elegans</name>
    <dbReference type="NCBI Taxonomy" id="6239"/>
    <lineage>
        <taxon>Eukaryota</taxon>
        <taxon>Metazoa</taxon>
        <taxon>Ecdysozoa</taxon>
        <taxon>Nematoda</taxon>
        <taxon>Chromadorea</taxon>
        <taxon>Rhabditida</taxon>
        <taxon>Rhabditina</taxon>
        <taxon>Rhabditomorpha</taxon>
        <taxon>Rhabditoidea</taxon>
        <taxon>Rhabditidae</taxon>
        <taxon>Peloderinae</taxon>
        <taxon>Caenorhabditis</taxon>
    </lineage>
</organism>
<keyword id="KW-1185">Reference proteome</keyword>